<proteinExistence type="evidence at transcript level"/>
<accession>Q6DDX3</accession>
<gene>
    <name type="primary">fam199x-b</name>
</gene>
<organism>
    <name type="scientific">Xenopus laevis</name>
    <name type="common">African clawed frog</name>
    <dbReference type="NCBI Taxonomy" id="8355"/>
    <lineage>
        <taxon>Eukaryota</taxon>
        <taxon>Metazoa</taxon>
        <taxon>Chordata</taxon>
        <taxon>Craniata</taxon>
        <taxon>Vertebrata</taxon>
        <taxon>Euteleostomi</taxon>
        <taxon>Amphibia</taxon>
        <taxon>Batrachia</taxon>
        <taxon>Anura</taxon>
        <taxon>Pipoidea</taxon>
        <taxon>Pipidae</taxon>
        <taxon>Xenopodinae</taxon>
        <taxon>Xenopus</taxon>
        <taxon>Xenopus</taxon>
    </lineage>
</organism>
<name>F19XB_XENLA</name>
<keyword id="KW-0175">Coiled coil</keyword>
<keyword id="KW-1185">Reference proteome</keyword>
<comment type="similarity">
    <text evidence="3">Belongs to the FAM199 family.</text>
</comment>
<feature type="chain" id="PRO_0000251214" description="Protein FAM199X-B">
    <location>
        <begin position="1"/>
        <end position="377"/>
    </location>
</feature>
<feature type="region of interest" description="Disordered" evidence="2">
    <location>
        <begin position="240"/>
        <end position="350"/>
    </location>
</feature>
<feature type="coiled-coil region" evidence="1">
    <location>
        <begin position="321"/>
        <end position="349"/>
    </location>
</feature>
<feature type="compositionally biased region" description="Basic and acidic residues" evidence="2">
    <location>
        <begin position="240"/>
        <end position="254"/>
    </location>
</feature>
<feature type="compositionally biased region" description="Low complexity" evidence="2">
    <location>
        <begin position="256"/>
        <end position="301"/>
    </location>
</feature>
<feature type="compositionally biased region" description="Basic residues" evidence="2">
    <location>
        <begin position="319"/>
        <end position="338"/>
    </location>
</feature>
<feature type="compositionally biased region" description="Basic and acidic residues" evidence="2">
    <location>
        <begin position="339"/>
        <end position="350"/>
    </location>
</feature>
<evidence type="ECO:0000255" key="1"/>
<evidence type="ECO:0000256" key="2">
    <source>
        <dbReference type="SAM" id="MobiDB-lite"/>
    </source>
</evidence>
<evidence type="ECO:0000305" key="3"/>
<dbReference type="EMBL" id="BC077378">
    <property type="protein sequence ID" value="AAH77378.1"/>
    <property type="molecule type" value="mRNA"/>
</dbReference>
<dbReference type="RefSeq" id="NP_001086740.1">
    <property type="nucleotide sequence ID" value="NM_001093271.1"/>
</dbReference>
<dbReference type="SMR" id="Q6DDX3"/>
<dbReference type="DNASU" id="446575"/>
<dbReference type="GeneID" id="446575"/>
<dbReference type="KEGG" id="xla:446575"/>
<dbReference type="AGR" id="Xenbase:XB-GENE-6255928"/>
<dbReference type="CTD" id="446575"/>
<dbReference type="Xenbase" id="XB-GENE-6255928">
    <property type="gene designation" value="fam199x.S"/>
</dbReference>
<dbReference type="OMA" id="QRCTRES"/>
<dbReference type="OrthoDB" id="6365484at2759"/>
<dbReference type="Proteomes" id="UP000186698">
    <property type="component" value="Chromosome 8S"/>
</dbReference>
<dbReference type="Bgee" id="446575">
    <property type="expression patterns" value="Expressed in liver and 19 other cell types or tissues"/>
</dbReference>
<dbReference type="InterPro" id="IPR029672">
    <property type="entry name" value="FAM199X_fam"/>
</dbReference>
<dbReference type="PANTHER" id="PTHR32003">
    <property type="entry name" value="PROTEIN FAM199X"/>
    <property type="match status" value="1"/>
</dbReference>
<dbReference type="PANTHER" id="PTHR32003:SF1">
    <property type="entry name" value="PROTEIN FAM199X"/>
    <property type="match status" value="1"/>
</dbReference>
<dbReference type="Pfam" id="PF15814">
    <property type="entry name" value="FAM199X"/>
    <property type="match status" value="1"/>
</dbReference>
<protein>
    <recommendedName>
        <fullName>Protein FAM199X-B</fullName>
    </recommendedName>
</protein>
<sequence>MSEGLYEKFLAPDEPFPLLSQRGSVSEEGCLDVSDFGCQLSSCHRTDPRLHRFHSNRWNLTSCGTSVASSECSEELFSSVSVGDQDDCYSLLDDQDFTSFDLFPEGSVCSDVSSSISTYWDWSDSEFEWQLPGSDIASGSDVLSDIIPSIPNSPCLPSKKKNKHRNLDELPWSAMTNDEQVEYIEYLSRKVSTEMGLREQLDIIKIIDPTAQISPTDSEFIIELNCLTDEKLKQVRSYIKEHSPRQRCTRESWKRTSYSTASTSGVSGASVSSSSASMVSTASSTGSSGGNSASNSSANMSRTHSDNNLSASAAERIRDSKKRSKQRKLQQKALRKRQLKEQRQARKERISGLFLNEEVLSVKVNEEDHEGDVDVLM</sequence>
<reference key="1">
    <citation type="submission" date="2004-07" db="EMBL/GenBank/DDBJ databases">
        <authorList>
            <consortium name="NIH - Xenopus Gene Collection (XGC) project"/>
        </authorList>
    </citation>
    <scope>NUCLEOTIDE SEQUENCE [LARGE SCALE MRNA]</scope>
    <source>
        <tissue>Embryo</tissue>
    </source>
</reference>